<comment type="function">
    <text evidence="1">With S4 and S12 plays an important role in translational accuracy.</text>
</comment>
<comment type="subunit">
    <text evidence="1">Part of the 30S ribosomal subunit. Contacts protein S4.</text>
</comment>
<comment type="domain">
    <text>The N-terminal domain interacts with the head of the 30S subunit; the C-terminal domain interacts with the body and contacts protein S4. The interaction surface between S4 and S5 is involved in control of translational fidelity.</text>
</comment>
<comment type="similarity">
    <text evidence="1">Belongs to the universal ribosomal protein uS5 family.</text>
</comment>
<name>RS5_METBU</name>
<keyword id="KW-0687">Ribonucleoprotein</keyword>
<keyword id="KW-0689">Ribosomal protein</keyword>
<keyword id="KW-0694">RNA-binding</keyword>
<keyword id="KW-0699">rRNA-binding</keyword>
<gene>
    <name evidence="1" type="primary">rps5</name>
    <name type="ordered locus">Mbur_0021</name>
</gene>
<reference key="1">
    <citation type="journal article" date="2009" name="ISME J.">
        <title>The genome sequence of the psychrophilic archaeon, Methanococcoides burtonii: the role of genome evolution in cold adaptation.</title>
        <authorList>
            <person name="Allen M.A."/>
            <person name="Lauro F.M."/>
            <person name="Williams T.J."/>
            <person name="Burg D."/>
            <person name="Siddiqui K.S."/>
            <person name="De Francisci D."/>
            <person name="Chong K.W."/>
            <person name="Pilak O."/>
            <person name="Chew H.H."/>
            <person name="De Maere M.Z."/>
            <person name="Ting L."/>
            <person name="Katrib M."/>
            <person name="Ng C."/>
            <person name="Sowers K.R."/>
            <person name="Galperin M.Y."/>
            <person name="Anderson I.J."/>
            <person name="Ivanova N."/>
            <person name="Dalin E."/>
            <person name="Martinez M."/>
            <person name="Lapidus A."/>
            <person name="Hauser L."/>
            <person name="Land M."/>
            <person name="Thomas T."/>
            <person name="Cavicchioli R."/>
        </authorList>
    </citation>
    <scope>NUCLEOTIDE SEQUENCE [LARGE SCALE GENOMIC DNA]</scope>
    <source>
        <strain>DSM 6242 / NBRC 107633 / OCM 468 / ACE-M</strain>
    </source>
</reference>
<proteinExistence type="inferred from homology"/>
<organism>
    <name type="scientific">Methanococcoides burtonii (strain DSM 6242 / NBRC 107633 / OCM 468 / ACE-M)</name>
    <dbReference type="NCBI Taxonomy" id="259564"/>
    <lineage>
        <taxon>Archaea</taxon>
        <taxon>Methanobacteriati</taxon>
        <taxon>Methanobacteriota</taxon>
        <taxon>Stenosarchaea group</taxon>
        <taxon>Methanomicrobia</taxon>
        <taxon>Methanosarcinales</taxon>
        <taxon>Methanosarcinaceae</taxon>
        <taxon>Methanococcoides</taxon>
    </lineage>
</organism>
<dbReference type="EMBL" id="CP000300">
    <property type="protein sequence ID" value="ABE51045.1"/>
    <property type="molecule type" value="Genomic_DNA"/>
</dbReference>
<dbReference type="RefSeq" id="WP_011498209.1">
    <property type="nucleotide sequence ID" value="NC_007955.1"/>
</dbReference>
<dbReference type="SMR" id="Q12ZT1"/>
<dbReference type="STRING" id="259564.Mbur_0021"/>
<dbReference type="GeneID" id="3996921"/>
<dbReference type="KEGG" id="mbu:Mbur_0021"/>
<dbReference type="HOGENOM" id="CLU_065898_0_1_2"/>
<dbReference type="OrthoDB" id="38155at2157"/>
<dbReference type="Proteomes" id="UP000001979">
    <property type="component" value="Chromosome"/>
</dbReference>
<dbReference type="GO" id="GO:0022627">
    <property type="term" value="C:cytosolic small ribosomal subunit"/>
    <property type="evidence" value="ECO:0007669"/>
    <property type="project" value="TreeGrafter"/>
</dbReference>
<dbReference type="GO" id="GO:0019843">
    <property type="term" value="F:rRNA binding"/>
    <property type="evidence" value="ECO:0007669"/>
    <property type="project" value="UniProtKB-UniRule"/>
</dbReference>
<dbReference type="GO" id="GO:0003735">
    <property type="term" value="F:structural constituent of ribosome"/>
    <property type="evidence" value="ECO:0007669"/>
    <property type="project" value="InterPro"/>
</dbReference>
<dbReference type="GO" id="GO:0006412">
    <property type="term" value="P:translation"/>
    <property type="evidence" value="ECO:0007669"/>
    <property type="project" value="UniProtKB-UniRule"/>
</dbReference>
<dbReference type="FunFam" id="3.30.160.20:FF:000002">
    <property type="entry name" value="40S ribosomal protein S2"/>
    <property type="match status" value="1"/>
</dbReference>
<dbReference type="FunFam" id="3.30.230.10:FF:000004">
    <property type="entry name" value="40S ribosomal protein S2"/>
    <property type="match status" value="1"/>
</dbReference>
<dbReference type="Gene3D" id="3.30.160.20">
    <property type="match status" value="1"/>
</dbReference>
<dbReference type="Gene3D" id="3.30.230.10">
    <property type="match status" value="1"/>
</dbReference>
<dbReference type="HAMAP" id="MF_01307_A">
    <property type="entry name" value="Ribosomal_uS5_A"/>
    <property type="match status" value="1"/>
</dbReference>
<dbReference type="InterPro" id="IPR020568">
    <property type="entry name" value="Ribosomal_Su5_D2-typ_SF"/>
</dbReference>
<dbReference type="InterPro" id="IPR000851">
    <property type="entry name" value="Ribosomal_uS5"/>
</dbReference>
<dbReference type="InterPro" id="IPR047866">
    <property type="entry name" value="Ribosomal_uS5_arc"/>
</dbReference>
<dbReference type="InterPro" id="IPR005324">
    <property type="entry name" value="Ribosomal_uS5_C"/>
</dbReference>
<dbReference type="InterPro" id="IPR005711">
    <property type="entry name" value="Ribosomal_uS5_euk/arc"/>
</dbReference>
<dbReference type="InterPro" id="IPR013810">
    <property type="entry name" value="Ribosomal_uS5_N"/>
</dbReference>
<dbReference type="InterPro" id="IPR018192">
    <property type="entry name" value="Ribosomal_uS5_N_CS"/>
</dbReference>
<dbReference type="InterPro" id="IPR014721">
    <property type="entry name" value="Ribsml_uS5_D2-typ_fold_subgr"/>
</dbReference>
<dbReference type="NCBIfam" id="NF003125">
    <property type="entry name" value="PRK04044.1"/>
    <property type="match status" value="1"/>
</dbReference>
<dbReference type="NCBIfam" id="TIGR01020">
    <property type="entry name" value="uS5_euk_arch"/>
    <property type="match status" value="1"/>
</dbReference>
<dbReference type="PANTHER" id="PTHR13718:SF4">
    <property type="entry name" value="40S RIBOSOMAL PROTEIN S2"/>
    <property type="match status" value="1"/>
</dbReference>
<dbReference type="PANTHER" id="PTHR13718">
    <property type="entry name" value="RIBOSOMAL S SUBUNIT"/>
    <property type="match status" value="1"/>
</dbReference>
<dbReference type="Pfam" id="PF00333">
    <property type="entry name" value="Ribosomal_S5"/>
    <property type="match status" value="1"/>
</dbReference>
<dbReference type="Pfam" id="PF03719">
    <property type="entry name" value="Ribosomal_S5_C"/>
    <property type="match status" value="1"/>
</dbReference>
<dbReference type="SUPFAM" id="SSF54768">
    <property type="entry name" value="dsRNA-binding domain-like"/>
    <property type="match status" value="1"/>
</dbReference>
<dbReference type="SUPFAM" id="SSF54211">
    <property type="entry name" value="Ribosomal protein S5 domain 2-like"/>
    <property type="match status" value="1"/>
</dbReference>
<dbReference type="PROSITE" id="PS00585">
    <property type="entry name" value="RIBOSOMAL_S5"/>
    <property type="match status" value="1"/>
</dbReference>
<dbReference type="PROSITE" id="PS50881">
    <property type="entry name" value="S5_DSRBD"/>
    <property type="match status" value="1"/>
</dbReference>
<sequence>MAYEYNEEWVPQTRLGKLVFDGQVTSMDEAMDSGLPIRESKIVDLLLPELEDEVLDINMVQRMTDSGRRVKFRATVIVGNGDGFVGLGQAKDVQVGPAIRKAIDNAKINITRIKRGCGSWECGCGLPHTVPSEVNGKAGSVTVVLKPAPRGLGLAAGGTARKVLEKAGVKDVWTRTEGQTRTTLNFAKATYNALMNTGTVRRPIVFDETEA</sequence>
<accession>Q12ZT1</accession>
<feature type="chain" id="PRO_0000293208" description="Small ribosomal subunit protein uS5">
    <location>
        <begin position="1"/>
        <end position="211"/>
    </location>
</feature>
<feature type="domain" description="S5 DRBM" evidence="1">
    <location>
        <begin position="50"/>
        <end position="113"/>
    </location>
</feature>
<evidence type="ECO:0000255" key="1">
    <source>
        <dbReference type="HAMAP-Rule" id="MF_01307"/>
    </source>
</evidence>
<evidence type="ECO:0000305" key="2"/>
<protein>
    <recommendedName>
        <fullName evidence="1">Small ribosomal subunit protein uS5</fullName>
    </recommendedName>
    <alternativeName>
        <fullName evidence="2">30S ribosomal protein S5</fullName>
    </alternativeName>
</protein>